<proteinExistence type="evidence at protein level"/>
<dbReference type="EC" id="6.2.1.2" evidence="6"/>
<dbReference type="EMBL" id="AY358660">
    <property type="protein sequence ID" value="AAQ89023.1"/>
    <property type="molecule type" value="mRNA"/>
</dbReference>
<dbReference type="EMBL" id="AK024573">
    <property type="protein sequence ID" value="BAB14930.1"/>
    <property type="molecule type" value="mRNA"/>
</dbReference>
<dbReference type="EMBL" id="AK294205">
    <property type="protein sequence ID" value="BAG57517.1"/>
    <property type="molecule type" value="mRNA"/>
</dbReference>
<dbReference type="EMBL" id="AK295258">
    <property type="protein sequence ID" value="BAG58247.1"/>
    <property type="molecule type" value="mRNA"/>
</dbReference>
<dbReference type="EMBL" id="AK300625">
    <property type="protein sequence ID" value="BAG62317.1"/>
    <property type="molecule type" value="mRNA"/>
</dbReference>
<dbReference type="EMBL" id="AC004707">
    <property type="status" value="NOT_ANNOTATED_CDS"/>
    <property type="molecule type" value="Genomic_DNA"/>
</dbReference>
<dbReference type="EMBL" id="AC021491">
    <property type="status" value="NOT_ANNOTATED_CDS"/>
    <property type="molecule type" value="Genomic_DNA"/>
</dbReference>
<dbReference type="EMBL" id="CH471109">
    <property type="protein sequence ID" value="EAW94612.1"/>
    <property type="molecule type" value="Genomic_DNA"/>
</dbReference>
<dbReference type="EMBL" id="BC012053">
    <property type="protein sequence ID" value="AAH12053.1"/>
    <property type="molecule type" value="mRNA"/>
</dbReference>
<dbReference type="EMBL" id="BC014123">
    <property type="protein sequence ID" value="AAH14123.1"/>
    <property type="molecule type" value="mRNA"/>
</dbReference>
<dbReference type="CCDS" id="CCDS11567.1">
    <molecule id="Q96CM8-1"/>
</dbReference>
<dbReference type="CCDS" id="CCDS74103.1">
    <molecule id="Q96CM8-2"/>
</dbReference>
<dbReference type="CCDS" id="CCDS74104.1">
    <molecule id="Q96CM8-3"/>
</dbReference>
<dbReference type="RefSeq" id="NP_001275897.1">
    <molecule id="Q96CM8-2"/>
    <property type="nucleotide sequence ID" value="NM_001288968.2"/>
</dbReference>
<dbReference type="RefSeq" id="NP_001275898.1">
    <molecule id="Q96CM8-3"/>
    <property type="nucleotide sequence ID" value="NM_001288969.2"/>
</dbReference>
<dbReference type="RefSeq" id="NP_001275899.1">
    <property type="nucleotide sequence ID" value="NM_001288970.1"/>
</dbReference>
<dbReference type="RefSeq" id="NP_001275900.1">
    <molecule id="Q96CM8-4"/>
    <property type="nucleotide sequence ID" value="NM_001288971.2"/>
</dbReference>
<dbReference type="RefSeq" id="NP_001275901.1">
    <molecule id="Q96CM8-4"/>
    <property type="nucleotide sequence ID" value="NM_001288972.2"/>
</dbReference>
<dbReference type="RefSeq" id="NP_079425.3">
    <molecule id="Q96CM8-1"/>
    <property type="nucleotide sequence ID" value="NM_025149.5"/>
</dbReference>
<dbReference type="SMR" id="Q96CM8"/>
<dbReference type="BioGRID" id="123187">
    <property type="interactions" value="140"/>
</dbReference>
<dbReference type="FunCoup" id="Q96CM8">
    <property type="interactions" value="583"/>
</dbReference>
<dbReference type="IntAct" id="Q96CM8">
    <property type="interactions" value="72"/>
</dbReference>
<dbReference type="MINT" id="Q96CM8"/>
<dbReference type="STRING" id="9606.ENSP00000401831"/>
<dbReference type="SwissLipids" id="SLP:000001145"/>
<dbReference type="GlyCosmos" id="Q96CM8">
    <property type="glycosylation" value="1 site, 1 glycan"/>
</dbReference>
<dbReference type="GlyGen" id="Q96CM8">
    <property type="glycosylation" value="1 site, 1 O-linked glycan (1 site)"/>
</dbReference>
<dbReference type="iPTMnet" id="Q96CM8"/>
<dbReference type="PhosphoSitePlus" id="Q96CM8"/>
<dbReference type="SwissPalm" id="Q96CM8"/>
<dbReference type="BioMuta" id="ACSF2"/>
<dbReference type="DMDM" id="166198367"/>
<dbReference type="CPTAC" id="CPTAC-5"/>
<dbReference type="CPTAC" id="CPTAC-6"/>
<dbReference type="jPOST" id="Q96CM8"/>
<dbReference type="MassIVE" id="Q96CM8"/>
<dbReference type="PaxDb" id="9606-ENSP00000401831"/>
<dbReference type="PeptideAtlas" id="Q96CM8"/>
<dbReference type="ProteomicsDB" id="4067"/>
<dbReference type="ProteomicsDB" id="4247"/>
<dbReference type="ProteomicsDB" id="5184"/>
<dbReference type="ProteomicsDB" id="76194">
    <molecule id="Q96CM8-1"/>
</dbReference>
<dbReference type="Pumba" id="Q96CM8"/>
<dbReference type="TopDownProteomics" id="Q96CM8-1">
    <molecule id="Q96CM8-1"/>
</dbReference>
<dbReference type="Antibodypedia" id="30532">
    <property type="antibodies" value="139 antibodies from 24 providers"/>
</dbReference>
<dbReference type="DNASU" id="80221"/>
<dbReference type="Ensembl" id="ENST00000300441.9">
    <molecule id="Q96CM8-1"/>
    <property type="protein sequence ID" value="ENSP00000300441.4"/>
    <property type="gene ID" value="ENSG00000167107.13"/>
</dbReference>
<dbReference type="Ensembl" id="ENST00000427954.6">
    <molecule id="Q96CM8-2"/>
    <property type="protein sequence ID" value="ENSP00000401831.2"/>
    <property type="gene ID" value="ENSG00000167107.13"/>
</dbReference>
<dbReference type="Ensembl" id="ENST00000502667.5">
    <molecule id="Q96CM8-3"/>
    <property type="protein sequence ID" value="ENSP00000421884.1"/>
    <property type="gene ID" value="ENSG00000167107.13"/>
</dbReference>
<dbReference type="GeneID" id="80221"/>
<dbReference type="KEGG" id="hsa:80221"/>
<dbReference type="MANE-Select" id="ENST00000300441.9">
    <property type="protein sequence ID" value="ENSP00000300441.4"/>
    <property type="RefSeq nucleotide sequence ID" value="NM_025149.6"/>
    <property type="RefSeq protein sequence ID" value="NP_079425.3"/>
</dbReference>
<dbReference type="UCSC" id="uc002iqu.4">
    <molecule id="Q96CM8-1"/>
    <property type="organism name" value="human"/>
</dbReference>
<dbReference type="AGR" id="HGNC:26101"/>
<dbReference type="CTD" id="80221"/>
<dbReference type="DisGeNET" id="80221"/>
<dbReference type="GeneCards" id="ACSF2"/>
<dbReference type="HGNC" id="HGNC:26101">
    <property type="gene designation" value="ACSF2"/>
</dbReference>
<dbReference type="HPA" id="ENSG00000167107">
    <property type="expression patterns" value="Tissue enhanced (kidney)"/>
</dbReference>
<dbReference type="MIM" id="610465">
    <property type="type" value="gene"/>
</dbReference>
<dbReference type="neXtProt" id="NX_Q96CM8"/>
<dbReference type="OpenTargets" id="ENSG00000167107"/>
<dbReference type="PharmGKB" id="PA162375338"/>
<dbReference type="VEuPathDB" id="HostDB:ENSG00000167107"/>
<dbReference type="eggNOG" id="KOG1177">
    <property type="taxonomic scope" value="Eukaryota"/>
</dbReference>
<dbReference type="GeneTree" id="ENSGT00940000156830"/>
<dbReference type="HOGENOM" id="CLU_000022_59_7_1"/>
<dbReference type="InParanoid" id="Q96CM8"/>
<dbReference type="OMA" id="ICCRGYN"/>
<dbReference type="OrthoDB" id="10253115at2759"/>
<dbReference type="PAN-GO" id="Q96CM8">
    <property type="GO annotations" value="2 GO annotations based on evolutionary models"/>
</dbReference>
<dbReference type="PhylomeDB" id="Q96CM8"/>
<dbReference type="TreeFam" id="TF313466"/>
<dbReference type="PathwayCommons" id="Q96CM8"/>
<dbReference type="Reactome" id="R-HSA-77289">
    <property type="pathway name" value="Mitochondrial Fatty Acid Beta-Oxidation"/>
</dbReference>
<dbReference type="SignaLink" id="Q96CM8"/>
<dbReference type="BioGRID-ORCS" id="80221">
    <property type="hits" value="19 hits in 1161 CRISPR screens"/>
</dbReference>
<dbReference type="ChiTaRS" id="ACSF2">
    <property type="organism name" value="human"/>
</dbReference>
<dbReference type="GenomeRNAi" id="80221"/>
<dbReference type="Pharos" id="Q96CM8">
    <property type="development level" value="Tbio"/>
</dbReference>
<dbReference type="PRO" id="PR:Q96CM8"/>
<dbReference type="Proteomes" id="UP000005640">
    <property type="component" value="Chromosome 17"/>
</dbReference>
<dbReference type="RNAct" id="Q96CM8">
    <property type="molecule type" value="protein"/>
</dbReference>
<dbReference type="Bgee" id="ENSG00000167107">
    <property type="expression patterns" value="Expressed in right lobe of thyroid gland and 155 other cell types or tissues"/>
</dbReference>
<dbReference type="ExpressionAtlas" id="Q96CM8">
    <property type="expression patterns" value="baseline and differential"/>
</dbReference>
<dbReference type="GO" id="GO:0005759">
    <property type="term" value="C:mitochondrial matrix"/>
    <property type="evidence" value="ECO:0000304"/>
    <property type="project" value="Reactome"/>
</dbReference>
<dbReference type="GO" id="GO:0005739">
    <property type="term" value="C:mitochondrion"/>
    <property type="evidence" value="ECO:0006056"/>
    <property type="project" value="FlyBase"/>
</dbReference>
<dbReference type="GO" id="GO:0005524">
    <property type="term" value="F:ATP binding"/>
    <property type="evidence" value="ECO:0007669"/>
    <property type="project" value="UniProtKB-KW"/>
</dbReference>
<dbReference type="GO" id="GO:0004467">
    <property type="term" value="F:long-chain fatty acid-CoA ligase activity"/>
    <property type="evidence" value="ECO:0000304"/>
    <property type="project" value="Reactome"/>
</dbReference>
<dbReference type="GO" id="GO:0031956">
    <property type="term" value="F:medium-chain fatty acid-CoA ligase activity"/>
    <property type="evidence" value="ECO:0000314"/>
    <property type="project" value="UniProtKB"/>
</dbReference>
<dbReference type="GO" id="GO:0006637">
    <property type="term" value="P:acyl-CoA metabolic process"/>
    <property type="evidence" value="ECO:0000304"/>
    <property type="project" value="Reactome"/>
</dbReference>
<dbReference type="GO" id="GO:0006631">
    <property type="term" value="P:fatty acid metabolic process"/>
    <property type="evidence" value="ECO:0000318"/>
    <property type="project" value="GO_Central"/>
</dbReference>
<dbReference type="CDD" id="cd05917">
    <property type="entry name" value="FACL_like_2"/>
    <property type="match status" value="1"/>
</dbReference>
<dbReference type="FunFam" id="3.30.300.30:FF:000008">
    <property type="entry name" value="2,3-dihydroxybenzoate-AMP ligase"/>
    <property type="match status" value="1"/>
</dbReference>
<dbReference type="FunFam" id="3.40.50.980:FF:000005">
    <property type="entry name" value="Acyl-CoA synthetase family member 2"/>
    <property type="match status" value="1"/>
</dbReference>
<dbReference type="FunFam" id="3.40.50.980:FF:000007">
    <property type="entry name" value="Acyl-CoA synthetase family member 2"/>
    <property type="match status" value="1"/>
</dbReference>
<dbReference type="FunFam" id="3.40.50.12780:FF:000003">
    <property type="entry name" value="Long-chain-fatty-acid--CoA ligase FadD"/>
    <property type="match status" value="1"/>
</dbReference>
<dbReference type="Gene3D" id="3.30.300.30">
    <property type="match status" value="1"/>
</dbReference>
<dbReference type="Gene3D" id="3.40.50.980">
    <property type="match status" value="2"/>
</dbReference>
<dbReference type="Gene3D" id="2.30.38.10">
    <property type="entry name" value="Luciferase, Domain 3"/>
    <property type="match status" value="1"/>
</dbReference>
<dbReference type="InterPro" id="IPR025110">
    <property type="entry name" value="AMP-bd_C"/>
</dbReference>
<dbReference type="InterPro" id="IPR045851">
    <property type="entry name" value="AMP-bd_C_sf"/>
</dbReference>
<dbReference type="InterPro" id="IPR020845">
    <property type="entry name" value="AMP-binding_CS"/>
</dbReference>
<dbReference type="InterPro" id="IPR000873">
    <property type="entry name" value="AMP-dep_synth/lig_dom"/>
</dbReference>
<dbReference type="PANTHER" id="PTHR43201">
    <property type="entry name" value="ACYL-COA SYNTHETASE"/>
    <property type="match status" value="1"/>
</dbReference>
<dbReference type="PANTHER" id="PTHR43201:SF5">
    <property type="entry name" value="MEDIUM-CHAIN ACYL-COA LIGASE ACSF2, MITOCHONDRIAL"/>
    <property type="match status" value="1"/>
</dbReference>
<dbReference type="Pfam" id="PF00501">
    <property type="entry name" value="AMP-binding"/>
    <property type="match status" value="1"/>
</dbReference>
<dbReference type="Pfam" id="PF13193">
    <property type="entry name" value="AMP-binding_C"/>
    <property type="match status" value="1"/>
</dbReference>
<dbReference type="SUPFAM" id="SSF56801">
    <property type="entry name" value="Acetyl-CoA synthetase-like"/>
    <property type="match status" value="1"/>
</dbReference>
<dbReference type="PROSITE" id="PS00455">
    <property type="entry name" value="AMP_BINDING"/>
    <property type="match status" value="1"/>
</dbReference>
<accession>Q96CM8</accession>
<accession>B4DFQ6</accession>
<accession>B4DHT5</accession>
<accession>B4DUF5</accession>
<accession>Q9H7G2</accession>
<protein>
    <recommendedName>
        <fullName evidence="8">Medium-chain acyl-CoA ligase ACSF2, mitochondrial</fullName>
        <ecNumber evidence="6">6.2.1.2</ecNumber>
    </recommendedName>
</protein>
<gene>
    <name evidence="9" type="primary">ACSF2</name>
    <name type="ORF">UNQ493/PRO1009</name>
</gene>
<comment type="function">
    <text evidence="5 6">Acyl-CoA synthases catalyze the initial reaction in fatty acid metabolism, by forming a thioester with CoA (PubMed:17762044). Has some preference toward medium-chain substrates (PubMed:17762044). Plays a role in adipocyte differentiation (PubMed:16380219).</text>
</comment>
<comment type="catalytic activity">
    <reaction evidence="6">
        <text>a medium-chain fatty acid + ATP + CoA = a medium-chain fatty acyl-CoA + AMP + diphosphate</text>
        <dbReference type="Rhea" id="RHEA:48340"/>
        <dbReference type="ChEBI" id="CHEBI:30616"/>
        <dbReference type="ChEBI" id="CHEBI:33019"/>
        <dbReference type="ChEBI" id="CHEBI:57287"/>
        <dbReference type="ChEBI" id="CHEBI:59558"/>
        <dbReference type="ChEBI" id="CHEBI:90546"/>
        <dbReference type="ChEBI" id="CHEBI:456215"/>
        <dbReference type="EC" id="6.2.1.2"/>
    </reaction>
</comment>
<comment type="catalytic activity">
    <reaction evidence="6">
        <text>octanoate + ATP + CoA = octanoyl-CoA + AMP + diphosphate</text>
        <dbReference type="Rhea" id="RHEA:33631"/>
        <dbReference type="ChEBI" id="CHEBI:25646"/>
        <dbReference type="ChEBI" id="CHEBI:30616"/>
        <dbReference type="ChEBI" id="CHEBI:33019"/>
        <dbReference type="ChEBI" id="CHEBI:57287"/>
        <dbReference type="ChEBI" id="CHEBI:57386"/>
        <dbReference type="ChEBI" id="CHEBI:456215"/>
    </reaction>
</comment>
<comment type="interaction">
    <interactant intactId="EBI-2876502">
        <id>Q96CM8</id>
    </interactant>
    <interactant intactId="EBI-741181">
        <id>Q6RW13</id>
        <label>AGTRAP</label>
    </interactant>
    <organismsDiffer>false</organismsDiffer>
    <experiments>4</experiments>
</comment>
<comment type="interaction">
    <interactant intactId="EBI-2876502">
        <id>Q96CM8</id>
    </interactant>
    <interactant intactId="EBI-3936819">
        <id>Q6Q788</id>
        <label>APOA5</label>
    </interactant>
    <organismsDiffer>false</organismsDiffer>
    <experiments>3</experiments>
</comment>
<comment type="interaction">
    <interactant intactId="EBI-2876502">
        <id>Q96CM8</id>
    </interactant>
    <interactant intactId="EBI-1220105">
        <id>P02654</id>
        <label>APOC1</label>
    </interactant>
    <organismsDiffer>false</organismsDiffer>
    <experiments>3</experiments>
</comment>
<comment type="interaction">
    <interactant intactId="EBI-2876502">
        <id>Q96CM8</id>
    </interactant>
    <interactant intactId="EBI-11343438">
        <id>Q3SXY8</id>
        <label>ARL13B</label>
    </interactant>
    <organismsDiffer>false</organismsDiffer>
    <experiments>3</experiments>
</comment>
<comment type="interaction">
    <interactant intactId="EBI-2876502">
        <id>Q96CM8</id>
    </interactant>
    <interactant intactId="EBI-714543">
        <id>Q15041</id>
        <label>ARL6IP1</label>
    </interactant>
    <organismsDiffer>false</organismsDiffer>
    <experiments>8</experiments>
</comment>
<comment type="interaction">
    <interactant intactId="EBI-2876502">
        <id>Q96CM8</id>
    </interactant>
    <interactant intactId="EBI-13381098">
        <id>Q8IYJ2-2</id>
        <label>C10orf67</label>
    </interactant>
    <organismsDiffer>false</organismsDiffer>
    <experiments>3</experiments>
</comment>
<comment type="interaction">
    <interactant intactId="EBI-2876502">
        <id>Q96CM8</id>
    </interactant>
    <interactant intactId="EBI-2873246">
        <id>Q8IUN9</id>
        <label>CLEC10A</label>
    </interactant>
    <organismsDiffer>false</organismsDiffer>
    <experiments>3</experiments>
</comment>
<comment type="interaction">
    <interactant intactId="EBI-2876502">
        <id>Q96CM8</id>
    </interactant>
    <interactant intactId="EBI-2548702">
        <id>Q96DZ9</id>
        <label>CMTM5</label>
    </interactant>
    <organismsDiffer>false</organismsDiffer>
    <experiments>5</experiments>
</comment>
<comment type="interaction">
    <interactant intactId="EBI-2876502">
        <id>Q96CM8</id>
    </interactant>
    <interactant intactId="EBI-11522780">
        <id>Q96DZ9-2</id>
        <label>CMTM5</label>
    </interactant>
    <organismsDiffer>false</organismsDiffer>
    <experiments>3</experiments>
</comment>
<comment type="interaction">
    <interactant intactId="EBI-2876502">
        <id>Q96CM8</id>
    </interactant>
    <interactant intactId="EBI-724524">
        <id>O75208</id>
        <label>COQ9</label>
    </interactant>
    <organismsDiffer>false</organismsDiffer>
    <experiments>4</experiments>
</comment>
<comment type="interaction">
    <interactant intactId="EBI-2876502">
        <id>Q96CM8</id>
    </interactant>
    <interactant intactId="EBI-12831978">
        <id>Q6ZPD8</id>
        <label>DGAT2L6</label>
    </interactant>
    <organismsDiffer>false</organismsDiffer>
    <experiments>3</experiments>
</comment>
<comment type="interaction">
    <interactant intactId="EBI-2876502">
        <id>Q96CM8</id>
    </interactant>
    <interactant intactId="EBI-13345167">
        <id>Q8TDT2</id>
        <label>GPR152</label>
    </interactant>
    <organismsDiffer>false</organismsDiffer>
    <experiments>3</experiments>
</comment>
<comment type="interaction">
    <interactant intactId="EBI-2876502">
        <id>Q96CM8</id>
    </interactant>
    <interactant intactId="EBI-1053887">
        <id>Q5XKP0</id>
        <label>MICOS13</label>
    </interactant>
    <organismsDiffer>false</organismsDiffer>
    <experiments>3</experiments>
</comment>
<comment type="interaction">
    <interactant intactId="EBI-2876502">
        <id>Q96CM8</id>
    </interactant>
    <interactant intactId="EBI-11913715">
        <id>Q8IZV5</id>
        <label>RDH10</label>
    </interactant>
    <organismsDiffer>false</organismsDiffer>
    <experiments>3</experiments>
</comment>
<comment type="interaction">
    <interactant intactId="EBI-2876502">
        <id>Q96CM8</id>
    </interactant>
    <interactant intactId="EBI-17589229">
        <id>Q6NTF9-3</id>
        <label>RHBDD2</label>
    </interactant>
    <organismsDiffer>false</organismsDiffer>
    <experiments>3</experiments>
</comment>
<comment type="interaction">
    <interactant intactId="EBI-2876502">
        <id>Q96CM8</id>
    </interactant>
    <interactant intactId="EBI-714881">
        <id>Q9HC62</id>
        <label>SENP2</label>
    </interactant>
    <organismsDiffer>false</organismsDiffer>
    <experiments>3</experiments>
</comment>
<comment type="interaction">
    <interactant intactId="EBI-2876502">
        <id>Q96CM8</id>
    </interactant>
    <interactant intactId="EBI-2623095">
        <id>Q9Y371</id>
        <label>SH3GLB1</label>
    </interactant>
    <organismsDiffer>false</organismsDiffer>
    <experiments>3</experiments>
</comment>
<comment type="interaction">
    <interactant intactId="EBI-2876502">
        <id>Q96CM8</id>
    </interactant>
    <interactant intactId="EBI-17640454">
        <id>Q96PQ1</id>
        <label>SIGLEC12</label>
    </interactant>
    <organismsDiffer>false</organismsDiffer>
    <experiments>3</experiments>
</comment>
<comment type="interaction">
    <interactant intactId="EBI-2876502">
        <id>Q96CM8</id>
    </interactant>
    <interactant intactId="EBI-11321949">
        <id>O43761</id>
        <label>SYNGR3</label>
    </interactant>
    <organismsDiffer>false</organismsDiffer>
    <experiments>3</experiments>
</comment>
<comment type="subcellular location">
    <subcellularLocation>
        <location evidence="8">Mitochondrion</location>
    </subcellularLocation>
</comment>
<comment type="alternative products">
    <event type="alternative splicing"/>
    <isoform>
        <id>Q96CM8-1</id>
        <name>1</name>
        <sequence type="displayed"/>
    </isoform>
    <isoform>
        <id>Q96CM8-2</id>
        <name>2</name>
        <sequence type="described" ref="VSP_055804"/>
    </isoform>
    <isoform>
        <id>Q96CM8-3</id>
        <name>3</name>
        <sequence type="described" ref="VSP_055805"/>
    </isoform>
    <isoform>
        <id>Q96CM8-4</id>
        <name>4</name>
        <sequence type="described" ref="VSP_055803"/>
    </isoform>
</comment>
<comment type="induction">
    <text evidence="5">By PPARG.</text>
</comment>
<comment type="similarity">
    <text evidence="8">Belongs to the ATP-dependent AMP-binding enzyme family.</text>
</comment>
<keyword id="KW-0007">Acetylation</keyword>
<keyword id="KW-0025">Alternative splicing</keyword>
<keyword id="KW-0067">ATP-binding</keyword>
<keyword id="KW-0276">Fatty acid metabolism</keyword>
<keyword id="KW-0436">Ligase</keyword>
<keyword id="KW-0443">Lipid metabolism</keyword>
<keyword id="KW-0496">Mitochondrion</keyword>
<keyword id="KW-0547">Nucleotide-binding</keyword>
<keyword id="KW-1267">Proteomics identification</keyword>
<keyword id="KW-1185">Reference proteome</keyword>
<keyword id="KW-0809">Transit peptide</keyword>
<reference key="1">
    <citation type="journal article" date="2003" name="Genome Res.">
        <title>The secreted protein discovery initiative (SPDI), a large-scale effort to identify novel human secreted and transmembrane proteins: a bioinformatics assessment.</title>
        <authorList>
            <person name="Clark H.F."/>
            <person name="Gurney A.L."/>
            <person name="Abaya E."/>
            <person name="Baker K."/>
            <person name="Baldwin D.T."/>
            <person name="Brush J."/>
            <person name="Chen J."/>
            <person name="Chow B."/>
            <person name="Chui C."/>
            <person name="Crowley C."/>
            <person name="Currell B."/>
            <person name="Deuel B."/>
            <person name="Dowd P."/>
            <person name="Eaton D."/>
            <person name="Foster J.S."/>
            <person name="Grimaldi C."/>
            <person name="Gu Q."/>
            <person name="Hass P.E."/>
            <person name="Heldens S."/>
            <person name="Huang A."/>
            <person name="Kim H.S."/>
            <person name="Klimowski L."/>
            <person name="Jin Y."/>
            <person name="Johnson S."/>
            <person name="Lee J."/>
            <person name="Lewis L."/>
            <person name="Liao D."/>
            <person name="Mark M.R."/>
            <person name="Robbie E."/>
            <person name="Sanchez C."/>
            <person name="Schoenfeld J."/>
            <person name="Seshagiri S."/>
            <person name="Simmons L."/>
            <person name="Singh J."/>
            <person name="Smith V."/>
            <person name="Stinson J."/>
            <person name="Vagts A."/>
            <person name="Vandlen R.L."/>
            <person name="Watanabe C."/>
            <person name="Wieand D."/>
            <person name="Woods K."/>
            <person name="Xie M.-H."/>
            <person name="Yansura D.G."/>
            <person name="Yi S."/>
            <person name="Yu G."/>
            <person name="Yuan J."/>
            <person name="Zhang M."/>
            <person name="Zhang Z."/>
            <person name="Goddard A.D."/>
            <person name="Wood W.I."/>
            <person name="Godowski P.J."/>
            <person name="Gray A.M."/>
        </authorList>
    </citation>
    <scope>NUCLEOTIDE SEQUENCE [LARGE SCALE MRNA] (ISOFORM 1)</scope>
</reference>
<reference key="2">
    <citation type="journal article" date="2004" name="Nat. Genet.">
        <title>Complete sequencing and characterization of 21,243 full-length human cDNAs.</title>
        <authorList>
            <person name="Ota T."/>
            <person name="Suzuki Y."/>
            <person name="Nishikawa T."/>
            <person name="Otsuki T."/>
            <person name="Sugiyama T."/>
            <person name="Irie R."/>
            <person name="Wakamatsu A."/>
            <person name="Hayashi K."/>
            <person name="Sato H."/>
            <person name="Nagai K."/>
            <person name="Kimura K."/>
            <person name="Makita H."/>
            <person name="Sekine M."/>
            <person name="Obayashi M."/>
            <person name="Nishi T."/>
            <person name="Shibahara T."/>
            <person name="Tanaka T."/>
            <person name="Ishii S."/>
            <person name="Yamamoto J."/>
            <person name="Saito K."/>
            <person name="Kawai Y."/>
            <person name="Isono Y."/>
            <person name="Nakamura Y."/>
            <person name="Nagahari K."/>
            <person name="Murakami K."/>
            <person name="Yasuda T."/>
            <person name="Iwayanagi T."/>
            <person name="Wagatsuma M."/>
            <person name="Shiratori A."/>
            <person name="Sudo H."/>
            <person name="Hosoiri T."/>
            <person name="Kaku Y."/>
            <person name="Kodaira H."/>
            <person name="Kondo H."/>
            <person name="Sugawara M."/>
            <person name="Takahashi M."/>
            <person name="Kanda K."/>
            <person name="Yokoi T."/>
            <person name="Furuya T."/>
            <person name="Kikkawa E."/>
            <person name="Omura Y."/>
            <person name="Abe K."/>
            <person name="Kamihara K."/>
            <person name="Katsuta N."/>
            <person name="Sato K."/>
            <person name="Tanikawa M."/>
            <person name="Yamazaki M."/>
            <person name="Ninomiya K."/>
            <person name="Ishibashi T."/>
            <person name="Yamashita H."/>
            <person name="Murakawa K."/>
            <person name="Fujimori K."/>
            <person name="Tanai H."/>
            <person name="Kimata M."/>
            <person name="Watanabe M."/>
            <person name="Hiraoka S."/>
            <person name="Chiba Y."/>
            <person name="Ishida S."/>
            <person name="Ono Y."/>
            <person name="Takiguchi S."/>
            <person name="Watanabe S."/>
            <person name="Yosida M."/>
            <person name="Hotuta T."/>
            <person name="Kusano J."/>
            <person name="Kanehori K."/>
            <person name="Takahashi-Fujii A."/>
            <person name="Hara H."/>
            <person name="Tanase T.-O."/>
            <person name="Nomura Y."/>
            <person name="Togiya S."/>
            <person name="Komai F."/>
            <person name="Hara R."/>
            <person name="Takeuchi K."/>
            <person name="Arita M."/>
            <person name="Imose N."/>
            <person name="Musashino K."/>
            <person name="Yuuki H."/>
            <person name="Oshima A."/>
            <person name="Sasaki N."/>
            <person name="Aotsuka S."/>
            <person name="Yoshikawa Y."/>
            <person name="Matsunawa H."/>
            <person name="Ichihara T."/>
            <person name="Shiohata N."/>
            <person name="Sano S."/>
            <person name="Moriya S."/>
            <person name="Momiyama H."/>
            <person name="Satoh N."/>
            <person name="Takami S."/>
            <person name="Terashima Y."/>
            <person name="Suzuki O."/>
            <person name="Nakagawa S."/>
            <person name="Senoh A."/>
            <person name="Mizoguchi H."/>
            <person name="Goto Y."/>
            <person name="Shimizu F."/>
            <person name="Wakebe H."/>
            <person name="Hishigaki H."/>
            <person name="Watanabe T."/>
            <person name="Sugiyama A."/>
            <person name="Takemoto M."/>
            <person name="Kawakami B."/>
            <person name="Yamazaki M."/>
            <person name="Watanabe K."/>
            <person name="Kumagai A."/>
            <person name="Itakura S."/>
            <person name="Fukuzumi Y."/>
            <person name="Fujimori Y."/>
            <person name="Komiyama M."/>
            <person name="Tashiro H."/>
            <person name="Tanigami A."/>
            <person name="Fujiwara T."/>
            <person name="Ono T."/>
            <person name="Yamada K."/>
            <person name="Fujii Y."/>
            <person name="Ozaki K."/>
            <person name="Hirao M."/>
            <person name="Ohmori Y."/>
            <person name="Kawabata A."/>
            <person name="Hikiji T."/>
            <person name="Kobatake N."/>
            <person name="Inagaki H."/>
            <person name="Ikema Y."/>
            <person name="Okamoto S."/>
            <person name="Okitani R."/>
            <person name="Kawakami T."/>
            <person name="Noguchi S."/>
            <person name="Itoh T."/>
            <person name="Shigeta K."/>
            <person name="Senba T."/>
            <person name="Matsumura K."/>
            <person name="Nakajima Y."/>
            <person name="Mizuno T."/>
            <person name="Morinaga M."/>
            <person name="Sasaki M."/>
            <person name="Togashi T."/>
            <person name="Oyama M."/>
            <person name="Hata H."/>
            <person name="Watanabe M."/>
            <person name="Komatsu T."/>
            <person name="Mizushima-Sugano J."/>
            <person name="Satoh T."/>
            <person name="Shirai Y."/>
            <person name="Takahashi Y."/>
            <person name="Nakagawa K."/>
            <person name="Okumura K."/>
            <person name="Nagase T."/>
            <person name="Nomura N."/>
            <person name="Kikuchi H."/>
            <person name="Masuho Y."/>
            <person name="Yamashita R."/>
            <person name="Nakai K."/>
            <person name="Yada T."/>
            <person name="Nakamura Y."/>
            <person name="Ohara O."/>
            <person name="Isogai T."/>
            <person name="Sugano S."/>
        </authorList>
    </citation>
    <scope>NUCLEOTIDE SEQUENCE [LARGE SCALE MRNA] (ISOFORMS 1; 2; 3 AND 4)</scope>
    <source>
        <tissue>Adipose tissue</tissue>
        <tissue>Amygdala</tissue>
        <tissue>Caudate nucleus</tissue>
    </source>
</reference>
<reference key="3">
    <citation type="journal article" date="2006" name="Nature">
        <title>DNA sequence of human chromosome 17 and analysis of rearrangement in the human lineage.</title>
        <authorList>
            <person name="Zody M.C."/>
            <person name="Garber M."/>
            <person name="Adams D.J."/>
            <person name="Sharpe T."/>
            <person name="Harrow J."/>
            <person name="Lupski J.R."/>
            <person name="Nicholson C."/>
            <person name="Searle S.M."/>
            <person name="Wilming L."/>
            <person name="Young S.K."/>
            <person name="Abouelleil A."/>
            <person name="Allen N.R."/>
            <person name="Bi W."/>
            <person name="Bloom T."/>
            <person name="Borowsky M.L."/>
            <person name="Bugalter B.E."/>
            <person name="Butler J."/>
            <person name="Chang J.L."/>
            <person name="Chen C.-K."/>
            <person name="Cook A."/>
            <person name="Corum B."/>
            <person name="Cuomo C.A."/>
            <person name="de Jong P.J."/>
            <person name="DeCaprio D."/>
            <person name="Dewar K."/>
            <person name="FitzGerald M."/>
            <person name="Gilbert J."/>
            <person name="Gibson R."/>
            <person name="Gnerre S."/>
            <person name="Goldstein S."/>
            <person name="Grafham D.V."/>
            <person name="Grocock R."/>
            <person name="Hafez N."/>
            <person name="Hagopian D.S."/>
            <person name="Hart E."/>
            <person name="Norman C.H."/>
            <person name="Humphray S."/>
            <person name="Jaffe D.B."/>
            <person name="Jones M."/>
            <person name="Kamal M."/>
            <person name="Khodiyar V.K."/>
            <person name="LaButti K."/>
            <person name="Laird G."/>
            <person name="Lehoczky J."/>
            <person name="Liu X."/>
            <person name="Lokyitsang T."/>
            <person name="Loveland J."/>
            <person name="Lui A."/>
            <person name="Macdonald P."/>
            <person name="Major J.E."/>
            <person name="Matthews L."/>
            <person name="Mauceli E."/>
            <person name="McCarroll S.A."/>
            <person name="Mihalev A.H."/>
            <person name="Mudge J."/>
            <person name="Nguyen C."/>
            <person name="Nicol R."/>
            <person name="O'Leary S.B."/>
            <person name="Osoegawa K."/>
            <person name="Schwartz D.C."/>
            <person name="Shaw-Smith C."/>
            <person name="Stankiewicz P."/>
            <person name="Steward C."/>
            <person name="Swarbreck D."/>
            <person name="Venkataraman V."/>
            <person name="Whittaker C.A."/>
            <person name="Yang X."/>
            <person name="Zimmer A.R."/>
            <person name="Bradley A."/>
            <person name="Hubbard T."/>
            <person name="Birren B.W."/>
            <person name="Rogers J."/>
            <person name="Lander E.S."/>
            <person name="Nusbaum C."/>
        </authorList>
    </citation>
    <scope>NUCLEOTIDE SEQUENCE [LARGE SCALE GENOMIC DNA]</scope>
</reference>
<reference key="4">
    <citation type="submission" date="2005-09" db="EMBL/GenBank/DDBJ databases">
        <authorList>
            <person name="Mural R.J."/>
            <person name="Istrail S."/>
            <person name="Sutton G.G."/>
            <person name="Florea L."/>
            <person name="Halpern A.L."/>
            <person name="Mobarry C.M."/>
            <person name="Lippert R."/>
            <person name="Walenz B."/>
            <person name="Shatkay H."/>
            <person name="Dew I."/>
            <person name="Miller J.R."/>
            <person name="Flanigan M.J."/>
            <person name="Edwards N.J."/>
            <person name="Bolanos R."/>
            <person name="Fasulo D."/>
            <person name="Halldorsson B.V."/>
            <person name="Hannenhalli S."/>
            <person name="Turner R."/>
            <person name="Yooseph S."/>
            <person name="Lu F."/>
            <person name="Nusskern D.R."/>
            <person name="Shue B.C."/>
            <person name="Zheng X.H."/>
            <person name="Zhong F."/>
            <person name="Delcher A.L."/>
            <person name="Huson D.H."/>
            <person name="Kravitz S.A."/>
            <person name="Mouchard L."/>
            <person name="Reinert K."/>
            <person name="Remington K.A."/>
            <person name="Clark A.G."/>
            <person name="Waterman M.S."/>
            <person name="Eichler E.E."/>
            <person name="Adams M.D."/>
            <person name="Hunkapiller M.W."/>
            <person name="Myers E.W."/>
            <person name="Venter J.C."/>
        </authorList>
    </citation>
    <scope>NUCLEOTIDE SEQUENCE [LARGE SCALE GENOMIC DNA]</scope>
</reference>
<reference key="5">
    <citation type="journal article" date="2004" name="Genome Res.">
        <title>The status, quality, and expansion of the NIH full-length cDNA project: the Mammalian Gene Collection (MGC).</title>
        <authorList>
            <consortium name="The MGC Project Team"/>
        </authorList>
    </citation>
    <scope>NUCLEOTIDE SEQUENCE [LARGE SCALE MRNA] (ISOFORM 1)</scope>
    <scope>VARIANT VAL-75</scope>
    <source>
        <tissue>Kidney</tissue>
        <tissue>Skin</tissue>
    </source>
</reference>
<reference key="6">
    <citation type="journal article" date="2006" name="Gene">
        <title>Identification of novel PPARgamma target genes in primary human adipocytes.</title>
        <authorList>
            <person name="Perera R.J."/>
            <person name="Marcusson E.G."/>
            <person name="Koo S."/>
            <person name="Kang X."/>
            <person name="Kim Y."/>
            <person name="White N."/>
            <person name="Dean N.M."/>
        </authorList>
    </citation>
    <scope>FUNCTION</scope>
    <scope>INDUCTION</scope>
</reference>
<reference key="7">
    <citation type="journal article" date="2007" name="J. Lipid Res.">
        <title>Evidence for 26 distinct acyl-coenzyme A synthetase genes in the human genome.</title>
        <authorList>
            <person name="Watkins P.A."/>
            <person name="Maiguel D."/>
            <person name="Jia Z."/>
            <person name="Pevsner J."/>
        </authorList>
    </citation>
    <scope>FUNCTION</scope>
    <scope>CATALYTIC ACTIVITY</scope>
</reference>
<reference key="8">
    <citation type="journal article" date="2014" name="J. Proteomics">
        <title>An enzyme assisted RP-RPLC approach for in-depth analysis of human liver phosphoproteome.</title>
        <authorList>
            <person name="Bian Y."/>
            <person name="Song C."/>
            <person name="Cheng K."/>
            <person name="Dong M."/>
            <person name="Wang F."/>
            <person name="Huang J."/>
            <person name="Sun D."/>
            <person name="Wang L."/>
            <person name="Ye M."/>
            <person name="Zou H."/>
        </authorList>
    </citation>
    <scope>IDENTIFICATION BY MASS SPECTROMETRY [LARGE SCALE ANALYSIS]</scope>
    <source>
        <tissue>Liver</tissue>
    </source>
</reference>
<reference key="9">
    <citation type="journal article" date="2015" name="Proteomics">
        <title>N-terminome analysis of the human mitochondrial proteome.</title>
        <authorList>
            <person name="Vaca Jacome A.S."/>
            <person name="Rabilloud T."/>
            <person name="Schaeffer-Reiss C."/>
            <person name="Rompais M."/>
            <person name="Ayoub D."/>
            <person name="Lane L."/>
            <person name="Bairoch A."/>
            <person name="Van Dorsselaer A."/>
            <person name="Carapito C."/>
        </authorList>
    </citation>
    <scope>IDENTIFICATION BY MASS SPECTROMETRY [LARGE SCALE ANALYSIS]</scope>
</reference>
<sequence>MAVYVGMLRLGRLCAGSSGVLGARAALSRSWQEARLQGVRFLSSREVDRMVSTPIGGLSYVQGCTKKHLNSKTVGQCLETTAQRVPEREALVVLHEDVRLTFAQLKEEVDKAASGLLSIGLCKGDRLGMWGPNSYAWVLMQLATAQAGIILVSVNPAYQAMELEYVLKKVGCKALVFPKQFKTQQYYNVLKQICPEVENAQPGALKSQRLPDLTTVISVDAPLPGTLLLDEVVAAGSTRQHLDQLQYNQQFLSCHDPINIQFTSGTTGSPKGATLSHYNIVNNSNILGERLKLHEKTPEQLRMILPNPLYHCLGSVAGTMMCLMYGATLILASPIFNGKKALEAISRERGTFLYGTPTMFVDILNQPDFSSYDISTMCGGVIAGSPAPPELIRAIINKINMKDLVVAYGTTENSPVTFAHFPEDTVEQKAESVGRIMPHTEARIMNMEAGTLAKLNTPGELCIRGYCVMLGYWGEPQKTEEAVDQDKWYWTGDVATMNEQGFCKIVGRSKDMIIRGGENIYPAELEDFFHTHPKVQEVQVVGVKDDRMGEEICACIRLKDGEETTVEEIKAFCKGKISHFKIPKYIVFVTNYPLTISGKIQKFKLREQMERHLNL</sequence>
<name>ACSF2_HUMAN</name>
<evidence type="ECO:0000250" key="1"/>
<evidence type="ECO:0000250" key="2">
    <source>
        <dbReference type="UniProtKB" id="Q8VCW8"/>
    </source>
</evidence>
<evidence type="ECO:0000255" key="3"/>
<evidence type="ECO:0000269" key="4">
    <source>
    </source>
</evidence>
<evidence type="ECO:0000269" key="5">
    <source>
    </source>
</evidence>
<evidence type="ECO:0000269" key="6">
    <source>
    </source>
</evidence>
<evidence type="ECO:0000303" key="7">
    <source>
    </source>
</evidence>
<evidence type="ECO:0000305" key="8"/>
<evidence type="ECO:0000312" key="9">
    <source>
        <dbReference type="HGNC" id="HGNC:26101"/>
    </source>
</evidence>
<organism>
    <name type="scientific">Homo sapiens</name>
    <name type="common">Human</name>
    <dbReference type="NCBI Taxonomy" id="9606"/>
    <lineage>
        <taxon>Eukaryota</taxon>
        <taxon>Metazoa</taxon>
        <taxon>Chordata</taxon>
        <taxon>Craniata</taxon>
        <taxon>Vertebrata</taxon>
        <taxon>Euteleostomi</taxon>
        <taxon>Mammalia</taxon>
        <taxon>Eutheria</taxon>
        <taxon>Euarchontoglires</taxon>
        <taxon>Primates</taxon>
        <taxon>Haplorrhini</taxon>
        <taxon>Catarrhini</taxon>
        <taxon>Hominidae</taxon>
        <taxon>Homo</taxon>
    </lineage>
</organism>
<feature type="transit peptide" description="Mitochondrion" evidence="3">
    <location>
        <begin position="1"/>
        <end position="41"/>
    </location>
</feature>
<feature type="chain" id="PRO_0000315793" description="Medium-chain acyl-CoA ligase ACSF2, mitochondrial">
    <location>
        <begin position="42"/>
        <end position="615"/>
    </location>
</feature>
<feature type="binding site" evidence="1">
    <location>
        <begin position="263"/>
        <end position="271"/>
    </location>
    <ligand>
        <name>ATP</name>
        <dbReference type="ChEBI" id="CHEBI:30616"/>
    </ligand>
</feature>
<feature type="binding site" evidence="1">
    <location>
        <position position="493"/>
    </location>
    <ligand>
        <name>ATP</name>
        <dbReference type="ChEBI" id="CHEBI:30616"/>
    </ligand>
</feature>
<feature type="binding site" evidence="1">
    <location>
        <position position="508"/>
    </location>
    <ligand>
        <name>ATP</name>
        <dbReference type="ChEBI" id="CHEBI:30616"/>
    </ligand>
</feature>
<feature type="binding site" evidence="1">
    <location>
        <position position="599"/>
    </location>
    <ligand>
        <name>ATP</name>
        <dbReference type="ChEBI" id="CHEBI:30616"/>
    </ligand>
</feature>
<feature type="modified residue" description="N6-acetyllysine" evidence="2">
    <location>
        <position position="179"/>
    </location>
</feature>
<feature type="modified residue" description="N6-acetyllysine; alternate" evidence="2">
    <location>
        <position position="182"/>
    </location>
</feature>
<feature type="modified residue" description="N6-succinyllysine; alternate" evidence="2">
    <location>
        <position position="182"/>
    </location>
</feature>
<feature type="modified residue" description="N6-acetyllysine" evidence="2">
    <location>
        <position position="340"/>
    </location>
</feature>
<feature type="modified residue" description="N6-acetyllysine" evidence="2">
    <location>
        <position position="398"/>
    </location>
</feature>
<feature type="modified residue" description="N6-succinyllysine" evidence="2">
    <location>
        <position position="478"/>
    </location>
</feature>
<feature type="modified residue" description="N6-acetyllysine" evidence="2">
    <location>
        <position position="510"/>
    </location>
</feature>
<feature type="modified residue" description="N6-acetyllysine; alternate" evidence="2">
    <location>
        <position position="544"/>
    </location>
</feature>
<feature type="modified residue" description="N6-succinyllysine; alternate" evidence="2">
    <location>
        <position position="544"/>
    </location>
</feature>
<feature type="modified residue" description="N6-acetyllysine; alternate" evidence="2">
    <location>
        <position position="570"/>
    </location>
</feature>
<feature type="modified residue" description="N6-succinyllysine; alternate" evidence="2">
    <location>
        <position position="570"/>
    </location>
</feature>
<feature type="modified residue" description="N6-succinyllysine" evidence="2">
    <location>
        <position position="599"/>
    </location>
</feature>
<feature type="splice variant" id="VSP_055803" description="In isoform 4." evidence="7">
    <location>
        <begin position="1"/>
        <end position="160"/>
    </location>
</feature>
<feature type="splice variant" id="VSP_055804" description="In isoform 2." evidence="7">
    <original>S</original>
    <variation>SARGGMEAGRQRISVPSSFTASAAAH</variation>
    <location>
        <position position="43"/>
    </location>
</feature>
<feature type="splice variant" id="VSP_055805" description="In isoform 3." evidence="7">
    <location>
        <begin position="146"/>
        <end position="158"/>
    </location>
</feature>
<feature type="sequence variant" id="VAR_038304" description="In dbSNP:rs17856448." evidence="4">
    <original>G</original>
    <variation>V</variation>
    <location>
        <position position="75"/>
    </location>
</feature>
<feature type="sequence variant" id="VAR_038305" description="In dbSNP:rs3744523.">
    <original>V</original>
    <variation>M</variation>
    <location>
        <position position="316"/>
    </location>
</feature>